<evidence type="ECO:0000250" key="1">
    <source>
        <dbReference type="UniProtKB" id="P36929"/>
    </source>
</evidence>
<evidence type="ECO:0000255" key="2">
    <source>
        <dbReference type="PROSITE-ProRule" id="PRU01023"/>
    </source>
</evidence>
<evidence type="ECO:0000269" key="3">
    <source>
    </source>
</evidence>
<evidence type="ECO:0000303" key="4">
    <source>
    </source>
</evidence>
<evidence type="ECO:0000312" key="5">
    <source>
        <dbReference type="EMBL" id="BAD70674.1"/>
    </source>
</evidence>
<accession>Q5SK01</accession>
<gene>
    <name evidence="4" type="primary">rsmB</name>
    <name evidence="5" type="ordered locus">TTHA0851</name>
</gene>
<dbReference type="EC" id="2.1.1.176" evidence="3"/>
<dbReference type="EMBL" id="AP008226">
    <property type="protein sequence ID" value="BAD70674.1"/>
    <property type="molecule type" value="Genomic_DNA"/>
</dbReference>
<dbReference type="RefSeq" id="WP_011228244.1">
    <property type="nucleotide sequence ID" value="NC_006461.1"/>
</dbReference>
<dbReference type="RefSeq" id="YP_144117.1">
    <property type="nucleotide sequence ID" value="NC_006461.1"/>
</dbReference>
<dbReference type="SMR" id="Q5SK01"/>
<dbReference type="EnsemblBacteria" id="BAD70674">
    <property type="protein sequence ID" value="BAD70674"/>
    <property type="gene ID" value="BAD70674"/>
</dbReference>
<dbReference type="GeneID" id="3170008"/>
<dbReference type="KEGG" id="ttj:TTHA0851"/>
<dbReference type="PATRIC" id="fig|300852.9.peg.845"/>
<dbReference type="eggNOG" id="COG0144">
    <property type="taxonomic scope" value="Bacteria"/>
</dbReference>
<dbReference type="HOGENOM" id="CLU_005316_0_4_0"/>
<dbReference type="PhylomeDB" id="Q5SK01"/>
<dbReference type="Proteomes" id="UP000000532">
    <property type="component" value="Chromosome"/>
</dbReference>
<dbReference type="GO" id="GO:0005737">
    <property type="term" value="C:cytoplasm"/>
    <property type="evidence" value="ECO:0007669"/>
    <property type="project" value="UniProtKB-SubCell"/>
</dbReference>
<dbReference type="GO" id="GO:0003723">
    <property type="term" value="F:RNA binding"/>
    <property type="evidence" value="ECO:0007669"/>
    <property type="project" value="UniProtKB-KW"/>
</dbReference>
<dbReference type="GO" id="GO:0008173">
    <property type="term" value="F:RNA methyltransferase activity"/>
    <property type="evidence" value="ECO:0007669"/>
    <property type="project" value="InterPro"/>
</dbReference>
<dbReference type="GO" id="GO:0006355">
    <property type="term" value="P:regulation of DNA-templated transcription"/>
    <property type="evidence" value="ECO:0007669"/>
    <property type="project" value="InterPro"/>
</dbReference>
<dbReference type="GO" id="GO:0001510">
    <property type="term" value="P:RNA methylation"/>
    <property type="evidence" value="ECO:0007669"/>
    <property type="project" value="InterPro"/>
</dbReference>
<dbReference type="GO" id="GO:0006364">
    <property type="term" value="P:rRNA processing"/>
    <property type="evidence" value="ECO:0007669"/>
    <property type="project" value="UniProtKB-KW"/>
</dbReference>
<dbReference type="CDD" id="cd02440">
    <property type="entry name" value="AdoMet_MTases"/>
    <property type="match status" value="1"/>
</dbReference>
<dbReference type="Gene3D" id="1.10.940.10">
    <property type="entry name" value="NusB-like"/>
    <property type="match status" value="1"/>
</dbReference>
<dbReference type="Gene3D" id="3.40.50.150">
    <property type="entry name" value="Vaccinia Virus protein VP39"/>
    <property type="match status" value="1"/>
</dbReference>
<dbReference type="InterPro" id="IPR049560">
    <property type="entry name" value="MeTrfase_RsmB-F_NOP2_cat"/>
</dbReference>
<dbReference type="InterPro" id="IPR001678">
    <property type="entry name" value="MeTrfase_RsmB-F_NOP2_dom"/>
</dbReference>
<dbReference type="InterPro" id="IPR035926">
    <property type="entry name" value="NusB-like_sf"/>
</dbReference>
<dbReference type="InterPro" id="IPR006027">
    <property type="entry name" value="NusB_RsmB_TIM44"/>
</dbReference>
<dbReference type="InterPro" id="IPR023267">
    <property type="entry name" value="RCMT"/>
</dbReference>
<dbReference type="InterPro" id="IPR029063">
    <property type="entry name" value="SAM-dependent_MTases_sf"/>
</dbReference>
<dbReference type="PANTHER" id="PTHR22807">
    <property type="entry name" value="NOP2 YEAST -RELATED NOL1/NOP2/FMU SUN DOMAIN-CONTAINING"/>
    <property type="match status" value="1"/>
</dbReference>
<dbReference type="PANTHER" id="PTHR22807:SF53">
    <property type="entry name" value="RIBOSOMAL RNA SMALL SUBUNIT METHYLTRANSFERASE B-RELATED"/>
    <property type="match status" value="1"/>
</dbReference>
<dbReference type="Pfam" id="PF01189">
    <property type="entry name" value="Methyltr_RsmB-F"/>
    <property type="match status" value="1"/>
</dbReference>
<dbReference type="Pfam" id="PF01029">
    <property type="entry name" value="NusB"/>
    <property type="match status" value="1"/>
</dbReference>
<dbReference type="PRINTS" id="PR02008">
    <property type="entry name" value="RCMTFAMILY"/>
</dbReference>
<dbReference type="SUPFAM" id="SSF48013">
    <property type="entry name" value="NusB-like"/>
    <property type="match status" value="1"/>
</dbReference>
<dbReference type="SUPFAM" id="SSF53335">
    <property type="entry name" value="S-adenosyl-L-methionine-dependent methyltransferases"/>
    <property type="match status" value="1"/>
</dbReference>
<dbReference type="PROSITE" id="PS51686">
    <property type="entry name" value="SAM_MT_RSMB_NOP"/>
    <property type="match status" value="1"/>
</dbReference>
<feature type="chain" id="PRO_0000431480" description="Ribosomal RNA small subunit methyltransferase B">
    <location>
        <begin position="1"/>
        <end position="398"/>
    </location>
</feature>
<feature type="active site" description="Nucleophile" evidence="2">
    <location>
        <position position="336"/>
    </location>
</feature>
<feature type="binding site" evidence="1">
    <location>
        <begin position="221"/>
        <end position="227"/>
    </location>
    <ligand>
        <name>S-adenosyl-L-methionine</name>
        <dbReference type="ChEBI" id="CHEBI:59789"/>
    </ligand>
</feature>
<feature type="binding site" evidence="1">
    <location>
        <position position="242"/>
    </location>
    <ligand>
        <name>S-adenosyl-L-methionine</name>
        <dbReference type="ChEBI" id="CHEBI:59789"/>
    </ligand>
</feature>
<feature type="binding site" evidence="1">
    <location>
        <position position="268"/>
    </location>
    <ligand>
        <name>S-adenosyl-L-methionine</name>
        <dbReference type="ChEBI" id="CHEBI:59789"/>
    </ligand>
</feature>
<feature type="binding site" evidence="1">
    <location>
        <position position="283"/>
    </location>
    <ligand>
        <name>S-adenosyl-L-methionine</name>
        <dbReference type="ChEBI" id="CHEBI:59789"/>
    </ligand>
</feature>
<organism>
    <name type="scientific">Thermus thermophilus (strain ATCC 27634 / DSM 579 / HB8)</name>
    <dbReference type="NCBI Taxonomy" id="300852"/>
    <lineage>
        <taxon>Bacteria</taxon>
        <taxon>Thermotogati</taxon>
        <taxon>Deinococcota</taxon>
        <taxon>Deinococci</taxon>
        <taxon>Thermales</taxon>
        <taxon>Thermaceae</taxon>
        <taxon>Thermus</taxon>
    </lineage>
</organism>
<sequence>MRAGTPRALAVAVLLEVDRGGRAQLLLDRALRRSPWPERDRAYATFLVYGALRRLRLLDHLLAPLLPRPEGLPPEVRWILRLGALEWLEGKPDHARVSPWVEEAKRRYPGLAGLVNAVLRRLAPREAPECVRLSLPDWLCEAWRGFFGDVAFAEGFNEPAPLFVTAYREVDLRPGPVPGSYLWEGPKTDFSALGLQPQNPASLFAAKLLEARPGERVLDLCGGAGLKAFYLAAQGAEVVSYDLNRRRQEAGARTARRLGLWVHYRTQDLTRPVPERAKKVLLDAPCTGTGTFRAHPELRYRLSPEDPARMAALQLQLLETAAQATEEGGVLVYSVCTLTEEEGEGVVRAFLARHPEFRPEPVQPPFPVLARGLGVYVDPRGGLDGFYYAKLRRVNSQA</sequence>
<keyword id="KW-0963">Cytoplasm</keyword>
<keyword id="KW-0489">Methyltransferase</keyword>
<keyword id="KW-1185">Reference proteome</keyword>
<keyword id="KW-0694">RNA-binding</keyword>
<keyword id="KW-0698">rRNA processing</keyword>
<keyword id="KW-0949">S-adenosyl-L-methionine</keyword>
<keyword id="KW-0808">Transferase</keyword>
<reference key="1">
    <citation type="submission" date="2004-11" db="EMBL/GenBank/DDBJ databases">
        <title>Complete genome sequence of Thermus thermophilus HB8.</title>
        <authorList>
            <person name="Masui R."/>
            <person name="Kurokawa K."/>
            <person name="Nakagawa N."/>
            <person name="Tokunaga F."/>
            <person name="Koyama Y."/>
            <person name="Shibata T."/>
            <person name="Oshima T."/>
            <person name="Yokoyama S."/>
            <person name="Yasunaga T."/>
            <person name="Kuramitsu S."/>
        </authorList>
    </citation>
    <scope>NUCLEOTIDE SEQUENCE [LARGE SCALE GENOMIC DNA]</scope>
    <source>
        <strain>ATCC 27634 / DSM 579 / HB8</strain>
    </source>
</reference>
<reference key="2">
    <citation type="journal article" date="2010" name="RNA">
        <title>Multi-site-specific 16S rRNA methyltransferase RsmF from Thermus thermophilus.</title>
        <authorList>
            <person name="Demirci H."/>
            <person name="Larsen L.H."/>
            <person name="Hansen T."/>
            <person name="Rasmussen A."/>
            <person name="Cadambi A."/>
            <person name="Gregory S.T."/>
            <person name="Kirpekar F."/>
            <person name="Jogl G."/>
        </authorList>
    </citation>
    <scope>FUNCTION</scope>
    <scope>CATALYTIC ACTIVITY</scope>
    <source>
        <strain>ATCC 27634 / DSM 579 / HB8</strain>
    </source>
</reference>
<name>RSMB_THET8</name>
<comment type="function">
    <text evidence="3">Specifically methylates the cytosine at position 967 (m5C967) of 16S rRNA.</text>
</comment>
<comment type="catalytic activity">
    <reaction evidence="3">
        <text>cytidine(967) in 16S rRNA + S-adenosyl-L-methionine = 5-methylcytidine(967) in 16S rRNA + S-adenosyl-L-homocysteine + H(+)</text>
        <dbReference type="Rhea" id="RHEA:42748"/>
        <dbReference type="Rhea" id="RHEA-COMP:10219"/>
        <dbReference type="Rhea" id="RHEA-COMP:10220"/>
        <dbReference type="ChEBI" id="CHEBI:15378"/>
        <dbReference type="ChEBI" id="CHEBI:57856"/>
        <dbReference type="ChEBI" id="CHEBI:59789"/>
        <dbReference type="ChEBI" id="CHEBI:74483"/>
        <dbReference type="ChEBI" id="CHEBI:82748"/>
        <dbReference type="EC" id="2.1.1.176"/>
    </reaction>
</comment>
<comment type="subcellular location">
    <subcellularLocation>
        <location evidence="1">Cytoplasm</location>
    </subcellularLocation>
</comment>
<comment type="similarity">
    <text evidence="2">Belongs to the class I-like SAM-binding methyltransferase superfamily. RsmB/NOP family.</text>
</comment>
<proteinExistence type="evidence at protein level"/>
<protein>
    <recommendedName>
        <fullName evidence="1">Ribosomal RNA small subunit methyltransferase B</fullName>
        <ecNumber evidence="3">2.1.1.176</ecNumber>
    </recommendedName>
    <alternativeName>
        <fullName evidence="1">16S rRNA m5C967 methyltransferase</fullName>
    </alternativeName>
    <alternativeName>
        <fullName evidence="1">rRNA (cytosine-C(5)-)-methyltransferase RsmB</fullName>
    </alternativeName>
</protein>